<comment type="function">
    <text evidence="1">The PR65 subunit of protein phosphatase 2A serves as a scaffolding molecule to coordinate the assembly of the catalytic subunit and a variable regulatory B subunit.</text>
</comment>
<comment type="subunit">
    <text evidence="1">PP2A consists of a common heterodimeric core enzyme, composed of a 36 kDa catalytic subunit (subunit C) and a 65 kDa constant regulatory subunit (PR65 or subunit A), that associates with a variety of regulatory subunits. Proteins that associate with the core dimer include three families of regulatory subunits B (the R2/B/PR55/B55, R3/B''/PR72/PR130/PR59 and R5/B'/B56 families), the 48 kDa variable regulatory subunit, viral proteins, and cell signaling molecules. Interacts with IPO9 (By similarity). Interacts with SGO1 (By similarity). Interacts with RAF1 (By similarity).</text>
</comment>
<comment type="domain">
    <text>Each HEAT repeat appears to consist of two alpha helices joined by a hydrophilic region, the intrarepeat loop. The repeat units may be arranged laterally to form a rod-like structure.</text>
</comment>
<comment type="similarity">
    <text evidence="3">Belongs to the phosphatase 2A regulatory subunit A family.</text>
</comment>
<gene>
    <name type="primary">Ppp2r1b</name>
</gene>
<dbReference type="EMBL" id="BC098007">
    <property type="protein sequence ID" value="AAH98007.1"/>
    <property type="molecule type" value="mRNA"/>
</dbReference>
<dbReference type="RefSeq" id="NP_001020589.1">
    <property type="nucleotide sequence ID" value="NM_001025418.1"/>
</dbReference>
<dbReference type="SMR" id="Q4QQT4"/>
<dbReference type="BioGRID" id="261094">
    <property type="interactions" value="1"/>
</dbReference>
<dbReference type="FunCoup" id="Q4QQT4">
    <property type="interactions" value="2891"/>
</dbReference>
<dbReference type="IntAct" id="Q4QQT4">
    <property type="interactions" value="2"/>
</dbReference>
<dbReference type="MINT" id="Q4QQT4"/>
<dbReference type="STRING" id="10116.ENSRNOP00000059428"/>
<dbReference type="iPTMnet" id="Q4QQT4"/>
<dbReference type="PhosphoSitePlus" id="Q4QQT4"/>
<dbReference type="jPOST" id="Q4QQT4"/>
<dbReference type="PaxDb" id="10116-ENSRNOP00000059428"/>
<dbReference type="GeneID" id="315648"/>
<dbReference type="KEGG" id="rno:315648"/>
<dbReference type="UCSC" id="RGD:1304764">
    <property type="organism name" value="rat"/>
</dbReference>
<dbReference type="AGR" id="RGD:1304764"/>
<dbReference type="CTD" id="5519"/>
<dbReference type="RGD" id="1304764">
    <property type="gene designation" value="Ppp2r1b"/>
</dbReference>
<dbReference type="VEuPathDB" id="HostDB:ENSRNOG00000010922"/>
<dbReference type="eggNOG" id="KOG0211">
    <property type="taxonomic scope" value="Eukaryota"/>
</dbReference>
<dbReference type="HOGENOM" id="CLU_015533_2_1_1"/>
<dbReference type="InParanoid" id="Q4QQT4"/>
<dbReference type="Reactome" id="R-RNO-113501">
    <property type="pathway name" value="Inhibition of replication initiation of damaged DNA by RB1/E2F1"/>
</dbReference>
<dbReference type="Reactome" id="R-RNO-141444">
    <property type="pathway name" value="Amplification of signal from unattached kinetochores via a MAD2 inhibitory signal"/>
</dbReference>
<dbReference type="Reactome" id="R-RNO-180024">
    <property type="pathway name" value="DARPP-32 events"/>
</dbReference>
<dbReference type="Reactome" id="R-RNO-195253">
    <property type="pathway name" value="Degradation of beta-catenin by the destruction complex"/>
</dbReference>
<dbReference type="Reactome" id="R-RNO-196299">
    <property type="pathway name" value="Beta-catenin phosphorylation cascade"/>
</dbReference>
<dbReference type="Reactome" id="R-RNO-198753">
    <property type="pathway name" value="ERK/MAPK targets"/>
</dbReference>
<dbReference type="Reactome" id="R-RNO-202670">
    <property type="pathway name" value="ERKs are inactivated"/>
</dbReference>
<dbReference type="Reactome" id="R-RNO-2467813">
    <property type="pathway name" value="Separation of Sister Chromatids"/>
</dbReference>
<dbReference type="Reactome" id="R-RNO-2500257">
    <property type="pathway name" value="Resolution of Sister Chromatid Cohesion"/>
</dbReference>
<dbReference type="Reactome" id="R-RNO-389356">
    <property type="pathway name" value="Co-stimulation by CD28"/>
</dbReference>
<dbReference type="Reactome" id="R-RNO-389513">
    <property type="pathway name" value="Co-inhibition by CTLA4"/>
</dbReference>
<dbReference type="Reactome" id="R-RNO-432142">
    <property type="pathway name" value="Platelet sensitization by LDL"/>
</dbReference>
<dbReference type="Reactome" id="R-RNO-4641262">
    <property type="pathway name" value="Disassembly of the destruction complex and recruitment of AXIN to the membrane"/>
</dbReference>
<dbReference type="Reactome" id="R-RNO-5663220">
    <property type="pathway name" value="RHO GTPases Activate Formins"/>
</dbReference>
<dbReference type="Reactome" id="R-RNO-5673000">
    <property type="pathway name" value="RAF activation"/>
</dbReference>
<dbReference type="Reactome" id="R-RNO-5675221">
    <property type="pathway name" value="Negative regulation of MAPK pathway"/>
</dbReference>
<dbReference type="Reactome" id="R-RNO-6804757">
    <property type="pathway name" value="Regulation of TP53 Degradation"/>
</dbReference>
<dbReference type="Reactome" id="R-RNO-6811558">
    <property type="pathway name" value="PI5P, PP2A and IER3 Regulate PI3K/AKT Signaling"/>
</dbReference>
<dbReference type="Reactome" id="R-RNO-68877">
    <property type="pathway name" value="Mitotic Prometaphase"/>
</dbReference>
<dbReference type="Reactome" id="R-RNO-69231">
    <property type="pathway name" value="Cyclin D associated events in G1"/>
</dbReference>
<dbReference type="Reactome" id="R-RNO-69273">
    <property type="pathway name" value="Cyclin A/B1/B2 associated events during G2/M transition"/>
</dbReference>
<dbReference type="Reactome" id="R-RNO-9648025">
    <property type="pathway name" value="EML4 and NUDC in mitotic spindle formation"/>
</dbReference>
<dbReference type="Reactome" id="R-RNO-9833482">
    <property type="pathway name" value="PKR-mediated signaling"/>
</dbReference>
<dbReference type="Reactome" id="R-RNO-9860927">
    <property type="pathway name" value="Turbulent (oscillatory, disturbed) flow shear stress activates signaling by PIEZO1 and integrins in endothelial cells"/>
</dbReference>
<dbReference type="PRO" id="PR:Q4QQT4"/>
<dbReference type="Proteomes" id="UP000002494">
    <property type="component" value="Chromosome 8"/>
</dbReference>
<dbReference type="Bgee" id="ENSRNOG00000010922">
    <property type="expression patterns" value="Expressed in adult mammalian kidney and 19 other cell types or tissues"/>
</dbReference>
<dbReference type="GO" id="GO:0005737">
    <property type="term" value="C:cytoplasm"/>
    <property type="evidence" value="ECO:0000318"/>
    <property type="project" value="GO_Central"/>
</dbReference>
<dbReference type="GO" id="GO:0005829">
    <property type="term" value="C:cytosol"/>
    <property type="evidence" value="ECO:0000318"/>
    <property type="project" value="GO_Central"/>
</dbReference>
<dbReference type="GO" id="GO:0098978">
    <property type="term" value="C:glutamatergic synapse"/>
    <property type="evidence" value="ECO:0000266"/>
    <property type="project" value="RGD"/>
</dbReference>
<dbReference type="GO" id="GO:0045121">
    <property type="term" value="C:membrane raft"/>
    <property type="evidence" value="ECO:0000266"/>
    <property type="project" value="RGD"/>
</dbReference>
<dbReference type="GO" id="GO:0005634">
    <property type="term" value="C:nucleus"/>
    <property type="evidence" value="ECO:0000318"/>
    <property type="project" value="GO_Central"/>
</dbReference>
<dbReference type="GO" id="GO:0000159">
    <property type="term" value="C:protein phosphatase type 2A complex"/>
    <property type="evidence" value="ECO:0000318"/>
    <property type="project" value="GO_Central"/>
</dbReference>
<dbReference type="GO" id="GO:0045202">
    <property type="term" value="C:synapse"/>
    <property type="evidence" value="ECO:0000266"/>
    <property type="project" value="RGD"/>
</dbReference>
<dbReference type="GO" id="GO:0019888">
    <property type="term" value="F:protein phosphatase regulator activity"/>
    <property type="evidence" value="ECO:0000318"/>
    <property type="project" value="GO_Central"/>
</dbReference>
<dbReference type="GO" id="GO:0060561">
    <property type="term" value="P:apoptotic process involved in morphogenesis"/>
    <property type="evidence" value="ECO:0000266"/>
    <property type="project" value="RGD"/>
</dbReference>
<dbReference type="GO" id="GO:0051754">
    <property type="term" value="P:meiotic sister chromatid cohesion, centromeric"/>
    <property type="evidence" value="ECO:0000318"/>
    <property type="project" value="GO_Central"/>
</dbReference>
<dbReference type="GO" id="GO:2001241">
    <property type="term" value="P:positive regulation of extrinsic apoptotic signaling pathway in absence of ligand"/>
    <property type="evidence" value="ECO:0000266"/>
    <property type="project" value="RGD"/>
</dbReference>
<dbReference type="GO" id="GO:0051225">
    <property type="term" value="P:spindle assembly"/>
    <property type="evidence" value="ECO:0000318"/>
    <property type="project" value="GO_Central"/>
</dbReference>
<dbReference type="FunFam" id="1.25.10.10:FF:000011">
    <property type="entry name" value="Serine/threonine-protein phosphatase 2A regulatory subunit A alpha isoform"/>
    <property type="match status" value="1"/>
</dbReference>
<dbReference type="Gene3D" id="1.25.10.10">
    <property type="entry name" value="Leucine-rich Repeat Variant"/>
    <property type="match status" value="1"/>
</dbReference>
<dbReference type="InterPro" id="IPR011989">
    <property type="entry name" value="ARM-like"/>
</dbReference>
<dbReference type="InterPro" id="IPR016024">
    <property type="entry name" value="ARM-type_fold"/>
</dbReference>
<dbReference type="InterPro" id="IPR000357">
    <property type="entry name" value="HEAT"/>
</dbReference>
<dbReference type="InterPro" id="IPR021133">
    <property type="entry name" value="HEAT_type_2"/>
</dbReference>
<dbReference type="InterPro" id="IPR054573">
    <property type="entry name" value="PP2A/SF3B1-like_HEAT"/>
</dbReference>
<dbReference type="InterPro" id="IPR051023">
    <property type="entry name" value="PP2A_Regulatory_Subunit_A"/>
</dbReference>
<dbReference type="PANTHER" id="PTHR10648">
    <property type="entry name" value="SERINE/THREONINE-PROTEIN PHOSPHATASE PP2A 65 KDA REGULATORY SUBUNIT"/>
    <property type="match status" value="1"/>
</dbReference>
<dbReference type="PANTHER" id="PTHR10648:SF9">
    <property type="entry name" value="SERINE_THREONINE-PROTEIN PHOSPHATASE 2A 65 KDA REGULATORY SUBUNIT A BETA ISOFORM"/>
    <property type="match status" value="1"/>
</dbReference>
<dbReference type="Pfam" id="PF02985">
    <property type="entry name" value="HEAT"/>
    <property type="match status" value="5"/>
</dbReference>
<dbReference type="Pfam" id="PF13646">
    <property type="entry name" value="HEAT_2"/>
    <property type="match status" value="1"/>
</dbReference>
<dbReference type="Pfam" id="PF22646">
    <property type="entry name" value="PPP2R1A-like_HEAT"/>
    <property type="match status" value="1"/>
</dbReference>
<dbReference type="SUPFAM" id="SSF48371">
    <property type="entry name" value="ARM repeat"/>
    <property type="match status" value="1"/>
</dbReference>
<dbReference type="PROSITE" id="PS50077">
    <property type="entry name" value="HEAT_REPEAT"/>
    <property type="match status" value="12"/>
</dbReference>
<organism>
    <name type="scientific">Rattus norvegicus</name>
    <name type="common">Rat</name>
    <dbReference type="NCBI Taxonomy" id="10116"/>
    <lineage>
        <taxon>Eukaryota</taxon>
        <taxon>Metazoa</taxon>
        <taxon>Chordata</taxon>
        <taxon>Craniata</taxon>
        <taxon>Vertebrata</taxon>
        <taxon>Euteleostomi</taxon>
        <taxon>Mammalia</taxon>
        <taxon>Eutheria</taxon>
        <taxon>Euarchontoglires</taxon>
        <taxon>Glires</taxon>
        <taxon>Rodentia</taxon>
        <taxon>Myomorpha</taxon>
        <taxon>Muroidea</taxon>
        <taxon>Muridae</taxon>
        <taxon>Murinae</taxon>
        <taxon>Rattus</taxon>
    </lineage>
</organism>
<reference key="1">
    <citation type="journal article" date="2004" name="Genome Res.">
        <title>The status, quality, and expansion of the NIH full-length cDNA project: the Mammalian Gene Collection (MGC).</title>
        <authorList>
            <consortium name="The MGC Project Team"/>
        </authorList>
    </citation>
    <scope>NUCLEOTIDE SEQUENCE [LARGE SCALE MRNA]</scope>
    <source>
        <tissue>Testis</tissue>
    </source>
</reference>
<evidence type="ECO:0000250" key="1"/>
<evidence type="ECO:0000250" key="2">
    <source>
        <dbReference type="UniProtKB" id="P30154"/>
    </source>
</evidence>
<evidence type="ECO:0000305" key="3"/>
<feature type="initiator methionine" description="Removed" evidence="2">
    <location>
        <position position="1"/>
    </location>
</feature>
<feature type="chain" id="PRO_0000071406" description="Serine/threonine-protein phosphatase 2A 65 kDa regulatory subunit A beta isoform">
    <location>
        <begin position="2"/>
        <end position="601"/>
    </location>
</feature>
<feature type="repeat" description="HEAT 1">
    <location>
        <begin position="20"/>
        <end position="58"/>
    </location>
</feature>
<feature type="repeat" description="HEAT 2">
    <location>
        <begin position="59"/>
        <end position="96"/>
    </location>
</feature>
<feature type="repeat" description="HEAT 3">
    <location>
        <begin position="97"/>
        <end position="135"/>
    </location>
</feature>
<feature type="repeat" description="HEAT 4">
    <location>
        <begin position="136"/>
        <end position="173"/>
    </location>
</feature>
<feature type="repeat" description="HEAT 5">
    <location>
        <begin position="174"/>
        <end position="212"/>
    </location>
</feature>
<feature type="repeat" description="HEAT 6">
    <location>
        <begin position="213"/>
        <end position="251"/>
    </location>
</feature>
<feature type="repeat" description="HEAT 7">
    <location>
        <begin position="252"/>
        <end position="290"/>
    </location>
</feature>
<feature type="repeat" description="HEAT 8">
    <location>
        <begin position="291"/>
        <end position="333"/>
    </location>
</feature>
<feature type="repeat" description="HEAT 9">
    <location>
        <begin position="334"/>
        <end position="372"/>
    </location>
</feature>
<feature type="repeat" description="HEAT 10">
    <location>
        <begin position="373"/>
        <end position="411"/>
    </location>
</feature>
<feature type="repeat" description="HEAT 11">
    <location>
        <begin position="412"/>
        <end position="450"/>
    </location>
</feature>
<feature type="repeat" description="HEAT 12">
    <location>
        <begin position="451"/>
        <end position="489"/>
    </location>
</feature>
<feature type="repeat" description="HEAT 13">
    <location>
        <begin position="490"/>
        <end position="528"/>
    </location>
</feature>
<feature type="repeat" description="HEAT 14">
    <location>
        <begin position="529"/>
        <end position="567"/>
    </location>
</feature>
<feature type="repeat" description="HEAT 15">
    <location>
        <begin position="568"/>
        <end position="601"/>
    </location>
</feature>
<feature type="modified residue" description="N-acetylalanine" evidence="2">
    <location>
        <position position="2"/>
    </location>
</feature>
<accession>Q4QQT4</accession>
<keyword id="KW-0007">Acetylation</keyword>
<keyword id="KW-1185">Reference proteome</keyword>
<keyword id="KW-0677">Repeat</keyword>
<sequence>MAGAAGPGTVPGAAGGDGDDSLYPIAVLIDELRNEDVQLRLNSIKKLSTIALALGVERTRTELLPFLTDTIYDEDEVLLALAEQLGNFTGLVGGPDFAHCLLPPLESLATVEETVVRDKAVESLRQISQEHTPVALEAHFVPLVKRLASGDWFTSRTSACGLFSVCYPRASNAVKAEIRQHFRSLCSDDTPMVRRAAASKLGEFAKVLELDSVKTEIVPLFTNLASDEQDSVRLLAVEACVSIAQLLSQDDLEALVMPTLRQAAEDKSWRVRYMVADKFSELQKAVGPKIALSDLIPAFQSLLRDCEAEVRAAAAHKVRELCENLPTEGRETVIMNQILPYIKELVSDTNQHVKSALASVIMGLSTVLGKENTIEHLLPLFLAQLKDECPEVRLNIISNLDCVNEVIGIRQLSQSLLPAIVELAEDAKWRVRLAIIEYMPLLAGQLGVEFFDEKLNSLCMAWLVDHVYAIREAATNNLMKLVQKFGTEWAQNTIVPKVLVMANDPNYLHRMTTLFCINALSEACGKEITTKQMLPIVLKMAGDQVANVRFNVAKSLQKIGPILDTNALQGEVKPVLQKLGQDEDMDVKYFAQEAISVLALA</sequence>
<proteinExistence type="evidence at transcript level"/>
<protein>
    <recommendedName>
        <fullName>Serine/threonine-protein phosphatase 2A 65 kDa regulatory subunit A beta isoform</fullName>
    </recommendedName>
    <alternativeName>
        <fullName>PP2A subunit A isoform PR65-beta</fullName>
    </alternativeName>
    <alternativeName>
        <fullName>PP2A subunit A isoform R1-beta</fullName>
    </alternativeName>
</protein>
<name>2AAB_RAT</name>